<name>TECT3_MOUSE</name>
<evidence type="ECO:0000250" key="1"/>
<evidence type="ECO:0000255" key="2"/>
<evidence type="ECO:0000256" key="3">
    <source>
        <dbReference type="SAM" id="MobiDB-lite"/>
    </source>
</evidence>
<evidence type="ECO:0000269" key="4">
    <source>
    </source>
</evidence>
<evidence type="ECO:0000303" key="5">
    <source>
    </source>
</evidence>
<evidence type="ECO:0000305" key="6"/>
<sequence length="595" mass="64824">MCTLQLHLLLLVVLMLSETARPQPSSTARAFPTSWGLEPVTPEVPTSAPPDSSESPTPWTLSMPVNATTDPFPALPICVCDLTPGTCDLNCCCDKDCDLLHPRTVFSFCLPGSVRSSSWVCVDNSLMFRSNSPFPSRVFTDSSGTTQFCVRVNNSKANYFQKLQTVNATNFQALAAEFGGQSFPSMPPETQPPVLFYRAGDPILTYYPSWSVVSLLRQPAAVGAGGLCAESNPAGFLESKSTTCPRFFRDLASSCTSEPALDAASYYNFRVLKVPRGVTDLQNMKFQVPVTLASQASPPLLAGNTCQNIVSQVVYEIETNGTFGIQKVSVSFRQTNLTVKPGVSLQQDFIVHFRAFQQRKAAAPAAPRSGNPGYLTGKPLLVLTGDTSHSMTLLQSEGNGLCSAKRHAVQFGVNAVSGCQLRPREVNCSHLQEEVYQTLHGRPRPEHVAVFGNADPAQRGGWTRILSRDCSVSAVNCTSCCLIPVSLEIQVLWAHLGLQSNPQAHVAGARFLYQCKSVQEHQRGIEVSLTTLVNFVDITQKPEPPRDQPRIDWKLPFDFFFPFKAALSRGASVQKDSLVLILCVLLLGLLNSQTK</sequence>
<reference key="1">
    <citation type="journal article" date="2006" name="Genes Dev.">
        <title>Tectonic, a novel regulator of the Hedgehog pathway required for both activation and inhibition.</title>
        <authorList>
            <person name="Reiter J.F."/>
            <person name="Skarnes W.C."/>
        </authorList>
    </citation>
    <scope>NUCLEOTIDE SEQUENCE [MRNA] (ISOFORM 1)</scope>
    <source>
        <strain>C57BL/6J</strain>
    </source>
</reference>
<reference key="2">
    <citation type="journal article" date="2005" name="Science">
        <title>The transcriptional landscape of the mammalian genome.</title>
        <authorList>
            <person name="Carninci P."/>
            <person name="Kasukawa T."/>
            <person name="Katayama S."/>
            <person name="Gough J."/>
            <person name="Frith M.C."/>
            <person name="Maeda N."/>
            <person name="Oyama R."/>
            <person name="Ravasi T."/>
            <person name="Lenhard B."/>
            <person name="Wells C."/>
            <person name="Kodzius R."/>
            <person name="Shimokawa K."/>
            <person name="Bajic V.B."/>
            <person name="Brenner S.E."/>
            <person name="Batalov S."/>
            <person name="Forrest A.R."/>
            <person name="Zavolan M."/>
            <person name="Davis M.J."/>
            <person name="Wilming L.G."/>
            <person name="Aidinis V."/>
            <person name="Allen J.E."/>
            <person name="Ambesi-Impiombato A."/>
            <person name="Apweiler R."/>
            <person name="Aturaliya R.N."/>
            <person name="Bailey T.L."/>
            <person name="Bansal M."/>
            <person name="Baxter L."/>
            <person name="Beisel K.W."/>
            <person name="Bersano T."/>
            <person name="Bono H."/>
            <person name="Chalk A.M."/>
            <person name="Chiu K.P."/>
            <person name="Choudhary V."/>
            <person name="Christoffels A."/>
            <person name="Clutterbuck D.R."/>
            <person name="Crowe M.L."/>
            <person name="Dalla E."/>
            <person name="Dalrymple B.P."/>
            <person name="de Bono B."/>
            <person name="Della Gatta G."/>
            <person name="di Bernardo D."/>
            <person name="Down T."/>
            <person name="Engstrom P."/>
            <person name="Fagiolini M."/>
            <person name="Faulkner G."/>
            <person name="Fletcher C.F."/>
            <person name="Fukushima T."/>
            <person name="Furuno M."/>
            <person name="Futaki S."/>
            <person name="Gariboldi M."/>
            <person name="Georgii-Hemming P."/>
            <person name="Gingeras T.R."/>
            <person name="Gojobori T."/>
            <person name="Green R.E."/>
            <person name="Gustincich S."/>
            <person name="Harbers M."/>
            <person name="Hayashi Y."/>
            <person name="Hensch T.K."/>
            <person name="Hirokawa N."/>
            <person name="Hill D."/>
            <person name="Huminiecki L."/>
            <person name="Iacono M."/>
            <person name="Ikeo K."/>
            <person name="Iwama A."/>
            <person name="Ishikawa T."/>
            <person name="Jakt M."/>
            <person name="Kanapin A."/>
            <person name="Katoh M."/>
            <person name="Kawasawa Y."/>
            <person name="Kelso J."/>
            <person name="Kitamura H."/>
            <person name="Kitano H."/>
            <person name="Kollias G."/>
            <person name="Krishnan S.P."/>
            <person name="Kruger A."/>
            <person name="Kummerfeld S.K."/>
            <person name="Kurochkin I.V."/>
            <person name="Lareau L.F."/>
            <person name="Lazarevic D."/>
            <person name="Lipovich L."/>
            <person name="Liu J."/>
            <person name="Liuni S."/>
            <person name="McWilliam S."/>
            <person name="Madan Babu M."/>
            <person name="Madera M."/>
            <person name="Marchionni L."/>
            <person name="Matsuda H."/>
            <person name="Matsuzawa S."/>
            <person name="Miki H."/>
            <person name="Mignone F."/>
            <person name="Miyake S."/>
            <person name="Morris K."/>
            <person name="Mottagui-Tabar S."/>
            <person name="Mulder N."/>
            <person name="Nakano N."/>
            <person name="Nakauchi H."/>
            <person name="Ng P."/>
            <person name="Nilsson R."/>
            <person name="Nishiguchi S."/>
            <person name="Nishikawa S."/>
            <person name="Nori F."/>
            <person name="Ohara O."/>
            <person name="Okazaki Y."/>
            <person name="Orlando V."/>
            <person name="Pang K.C."/>
            <person name="Pavan W.J."/>
            <person name="Pavesi G."/>
            <person name="Pesole G."/>
            <person name="Petrovsky N."/>
            <person name="Piazza S."/>
            <person name="Reed J."/>
            <person name="Reid J.F."/>
            <person name="Ring B.Z."/>
            <person name="Ringwald M."/>
            <person name="Rost B."/>
            <person name="Ruan Y."/>
            <person name="Salzberg S.L."/>
            <person name="Sandelin A."/>
            <person name="Schneider C."/>
            <person name="Schoenbach C."/>
            <person name="Sekiguchi K."/>
            <person name="Semple C.A."/>
            <person name="Seno S."/>
            <person name="Sessa L."/>
            <person name="Sheng Y."/>
            <person name="Shibata Y."/>
            <person name="Shimada H."/>
            <person name="Shimada K."/>
            <person name="Silva D."/>
            <person name="Sinclair B."/>
            <person name="Sperling S."/>
            <person name="Stupka E."/>
            <person name="Sugiura K."/>
            <person name="Sultana R."/>
            <person name="Takenaka Y."/>
            <person name="Taki K."/>
            <person name="Tammoja K."/>
            <person name="Tan S.L."/>
            <person name="Tang S."/>
            <person name="Taylor M.S."/>
            <person name="Tegner J."/>
            <person name="Teichmann S.A."/>
            <person name="Ueda H.R."/>
            <person name="van Nimwegen E."/>
            <person name="Verardo R."/>
            <person name="Wei C.L."/>
            <person name="Yagi K."/>
            <person name="Yamanishi H."/>
            <person name="Zabarovsky E."/>
            <person name="Zhu S."/>
            <person name="Zimmer A."/>
            <person name="Hide W."/>
            <person name="Bult C."/>
            <person name="Grimmond S.M."/>
            <person name="Teasdale R.D."/>
            <person name="Liu E.T."/>
            <person name="Brusic V."/>
            <person name="Quackenbush J."/>
            <person name="Wahlestedt C."/>
            <person name="Mattick J.S."/>
            <person name="Hume D.A."/>
            <person name="Kai C."/>
            <person name="Sasaki D."/>
            <person name="Tomaru Y."/>
            <person name="Fukuda S."/>
            <person name="Kanamori-Katayama M."/>
            <person name="Suzuki M."/>
            <person name="Aoki J."/>
            <person name="Arakawa T."/>
            <person name="Iida J."/>
            <person name="Imamura K."/>
            <person name="Itoh M."/>
            <person name="Kato T."/>
            <person name="Kawaji H."/>
            <person name="Kawagashira N."/>
            <person name="Kawashima T."/>
            <person name="Kojima M."/>
            <person name="Kondo S."/>
            <person name="Konno H."/>
            <person name="Nakano K."/>
            <person name="Ninomiya N."/>
            <person name="Nishio T."/>
            <person name="Okada M."/>
            <person name="Plessy C."/>
            <person name="Shibata K."/>
            <person name="Shiraki T."/>
            <person name="Suzuki S."/>
            <person name="Tagami M."/>
            <person name="Waki K."/>
            <person name="Watahiki A."/>
            <person name="Okamura-Oho Y."/>
            <person name="Suzuki H."/>
            <person name="Kawai J."/>
            <person name="Hayashizaki Y."/>
        </authorList>
    </citation>
    <scope>NUCLEOTIDE SEQUENCE [LARGE SCALE MRNA] (ISOFORMS 2 AND 3)</scope>
    <source>
        <strain>C57BL/6J</strain>
        <tissue>Testis</tissue>
    </source>
</reference>
<reference key="3">
    <citation type="journal article" date="2004" name="Genome Res.">
        <title>The status, quality, and expansion of the NIH full-length cDNA project: the Mammalian Gene Collection (MGC).</title>
        <authorList>
            <consortium name="The MGC Project Team"/>
        </authorList>
    </citation>
    <scope>NUCLEOTIDE SEQUENCE [LARGE SCALE MRNA] (ISOFORM 1)</scope>
    <source>
        <strain>FVB/N</strain>
        <tissue>Mammary tumor</tissue>
    </source>
</reference>
<reference key="4">
    <citation type="journal article" date="2011" name="Cell">
        <title>Mapping the NPHP-JBTS-MKS protein network reveals ciliopathy disease genes and pathways.</title>
        <authorList>
            <person name="Sang L."/>
            <person name="Miller J.J."/>
            <person name="Corbit K.C."/>
            <person name="Giles R.H."/>
            <person name="Brauer M.J."/>
            <person name="Otto E.A."/>
            <person name="Baye L.M."/>
            <person name="Wen X."/>
            <person name="Scales S.J."/>
            <person name="Kwong M."/>
            <person name="Huntzicker E.G."/>
            <person name="Sfakianos M.K."/>
            <person name="Sandoval W."/>
            <person name="Bazan J.F."/>
            <person name="Kulkarni P."/>
            <person name="Garcia-Gonzalo F.R."/>
            <person name="Seol A.D."/>
            <person name="O'Toole J.F."/>
            <person name="Held S."/>
            <person name="Reutter H.M."/>
            <person name="Lane W.S."/>
            <person name="Rafiq M.A."/>
            <person name="Noor A."/>
            <person name="Ansar M."/>
            <person name="Devi A.R."/>
            <person name="Sheffield V.C."/>
            <person name="Slusarski D.C."/>
            <person name="Vincent J.B."/>
            <person name="Doherty D.A."/>
            <person name="Hildebrandt F."/>
            <person name="Reiter J.F."/>
            <person name="Jackson P.K."/>
        </authorList>
    </citation>
    <scope>INTERACTION WITH MKS1</scope>
</reference>
<reference key="5">
    <citation type="journal article" date="2011" name="Nat. Genet.">
        <title>A transition zone complex regulates mammalian ciliogenesis and ciliary membrane composition.</title>
        <authorList>
            <person name="Garcia-Gonzalo F.R."/>
            <person name="Corbit K.C."/>
            <person name="Sirerol-Piquer M.S."/>
            <person name="Ramaswami G."/>
            <person name="Otto E.A."/>
            <person name="Noriega T.R."/>
            <person name="Seol A.D."/>
            <person name="Robinson J.F."/>
            <person name="Bennett C.L."/>
            <person name="Josifova D.J."/>
            <person name="Garcia-Verdugo J.M."/>
            <person name="Katsanis N."/>
            <person name="Hildebrandt F."/>
            <person name="Reiter J.F."/>
        </authorList>
    </citation>
    <scope>FUNCTION</scope>
    <scope>SUBCELLULAR LOCATION</scope>
    <scope>IDENTIFICATION IN THE TECTONIC-LIKE COMPLEX</scope>
</reference>
<dbReference type="EMBL" id="DQ278871">
    <property type="protein sequence ID" value="ABB90563.1"/>
    <property type="molecule type" value="mRNA"/>
</dbReference>
<dbReference type="EMBL" id="AK015861">
    <property type="protein sequence ID" value="BAB30004.1"/>
    <property type="molecule type" value="mRNA"/>
</dbReference>
<dbReference type="EMBL" id="AK016982">
    <property type="protein sequence ID" value="BAB30537.1"/>
    <property type="molecule type" value="mRNA"/>
</dbReference>
<dbReference type="EMBL" id="AK030156">
    <property type="protein sequence ID" value="BAC26813.1"/>
    <property type="molecule type" value="mRNA"/>
</dbReference>
<dbReference type="EMBL" id="BC027335">
    <property type="protein sequence ID" value="AAH27335.1"/>
    <property type="molecule type" value="mRNA"/>
</dbReference>
<dbReference type="EMBL" id="BC080805">
    <property type="protein sequence ID" value="AAH80805.1"/>
    <property type="molecule type" value="mRNA"/>
</dbReference>
<dbReference type="CCDS" id="CCDS29804.1">
    <molecule id="Q8R2Q6-1"/>
</dbReference>
<dbReference type="RefSeq" id="NP_080536.2">
    <molecule id="Q8R2Q6-1"/>
    <property type="nucleotide sequence ID" value="NM_026260.2"/>
</dbReference>
<dbReference type="BioGRID" id="212298">
    <property type="interactions" value="1"/>
</dbReference>
<dbReference type="CORUM" id="Q8R2Q6"/>
<dbReference type="FunCoup" id="Q8R2Q6">
    <property type="interactions" value="1998"/>
</dbReference>
<dbReference type="IntAct" id="Q8R2Q6">
    <property type="interactions" value="2"/>
</dbReference>
<dbReference type="STRING" id="10090.ENSMUSP00000025981"/>
<dbReference type="GlyCosmos" id="Q8R2Q6">
    <property type="glycosylation" value="2 sites, No reported glycans"/>
</dbReference>
<dbReference type="GlyGen" id="Q8R2Q6">
    <property type="glycosylation" value="4 sites, 2 N-linked glycans (2 sites)"/>
</dbReference>
<dbReference type="iPTMnet" id="Q8R2Q6"/>
<dbReference type="PhosphoSitePlus" id="Q8R2Q6"/>
<dbReference type="PaxDb" id="10090-ENSMUSP00000025981"/>
<dbReference type="ProteomicsDB" id="262853">
    <molecule id="Q8R2Q6-1"/>
</dbReference>
<dbReference type="ProteomicsDB" id="262854">
    <molecule id="Q8R2Q6-2"/>
</dbReference>
<dbReference type="ProteomicsDB" id="262855">
    <molecule id="Q8R2Q6-3"/>
</dbReference>
<dbReference type="Antibodypedia" id="30655">
    <property type="antibodies" value="191 antibodies from 31 providers"/>
</dbReference>
<dbReference type="DNASU" id="67590"/>
<dbReference type="Ensembl" id="ENSMUST00000025981.15">
    <molecule id="Q8R2Q6-1"/>
    <property type="protein sequence ID" value="ENSMUSP00000025981.9"/>
    <property type="gene ID" value="ENSMUSG00000025008.16"/>
</dbReference>
<dbReference type="Ensembl" id="ENSMUST00000135795.8">
    <molecule id="Q8R2Q6-2"/>
    <property type="protein sequence ID" value="ENSMUSP00000123461.2"/>
    <property type="gene ID" value="ENSMUSG00000025008.16"/>
</dbReference>
<dbReference type="GeneID" id="67590"/>
<dbReference type="KEGG" id="mmu:67590"/>
<dbReference type="UCSC" id="uc008hla.1">
    <molecule id="Q8R2Q6-1"/>
    <property type="organism name" value="mouse"/>
</dbReference>
<dbReference type="UCSC" id="uc008hlb.1">
    <molecule id="Q8R2Q6-2"/>
    <property type="organism name" value="mouse"/>
</dbReference>
<dbReference type="UCSC" id="uc008hlc.1">
    <molecule id="Q8R2Q6-3"/>
    <property type="organism name" value="mouse"/>
</dbReference>
<dbReference type="AGR" id="MGI:1914840"/>
<dbReference type="CTD" id="26123"/>
<dbReference type="MGI" id="MGI:1914840">
    <property type="gene designation" value="Tctn3"/>
</dbReference>
<dbReference type="VEuPathDB" id="HostDB:ENSMUSG00000025008"/>
<dbReference type="eggNOG" id="ENOG502RKDI">
    <property type="taxonomic scope" value="Eukaryota"/>
</dbReference>
<dbReference type="GeneTree" id="ENSGT00570000079101"/>
<dbReference type="HOGENOM" id="CLU_016974_1_0_1"/>
<dbReference type="InParanoid" id="Q8R2Q6"/>
<dbReference type="OMA" id="KVQFGVN"/>
<dbReference type="OrthoDB" id="184109at2759"/>
<dbReference type="PhylomeDB" id="Q8R2Q6"/>
<dbReference type="TreeFam" id="TF329169"/>
<dbReference type="Reactome" id="R-MMU-5620912">
    <property type="pathway name" value="Anchoring of the basal body to the plasma membrane"/>
</dbReference>
<dbReference type="BioGRID-ORCS" id="67590">
    <property type="hits" value="3 hits in 77 CRISPR screens"/>
</dbReference>
<dbReference type="ChiTaRS" id="Tctn3">
    <property type="organism name" value="mouse"/>
</dbReference>
<dbReference type="PRO" id="PR:Q8R2Q6"/>
<dbReference type="Proteomes" id="UP000000589">
    <property type="component" value="Chromosome 19"/>
</dbReference>
<dbReference type="RNAct" id="Q8R2Q6">
    <property type="molecule type" value="protein"/>
</dbReference>
<dbReference type="Bgee" id="ENSMUSG00000025008">
    <property type="expression patterns" value="Expressed in fourth ventricle and 233 other cell types or tissues"/>
</dbReference>
<dbReference type="ExpressionAtlas" id="Q8R2Q6">
    <property type="expression patterns" value="baseline and differential"/>
</dbReference>
<dbReference type="GO" id="GO:0016020">
    <property type="term" value="C:membrane"/>
    <property type="evidence" value="ECO:0007669"/>
    <property type="project" value="UniProtKB-SubCell"/>
</dbReference>
<dbReference type="GO" id="GO:0005634">
    <property type="term" value="C:nucleus"/>
    <property type="evidence" value="ECO:0007669"/>
    <property type="project" value="Ensembl"/>
</dbReference>
<dbReference type="GO" id="GO:0006915">
    <property type="term" value="P:apoptotic process"/>
    <property type="evidence" value="ECO:0007669"/>
    <property type="project" value="UniProtKB-KW"/>
</dbReference>
<dbReference type="GO" id="GO:0060271">
    <property type="term" value="P:cilium assembly"/>
    <property type="evidence" value="ECO:0000315"/>
    <property type="project" value="UniProtKB"/>
</dbReference>
<dbReference type="GO" id="GO:0043065">
    <property type="term" value="P:positive regulation of apoptotic process"/>
    <property type="evidence" value="ECO:0007669"/>
    <property type="project" value="Ensembl"/>
</dbReference>
<dbReference type="GO" id="GO:0007224">
    <property type="term" value="P:smoothened signaling pathway"/>
    <property type="evidence" value="ECO:0007669"/>
    <property type="project" value="Ensembl"/>
</dbReference>
<dbReference type="InterPro" id="IPR040354">
    <property type="entry name" value="Tectonic"/>
</dbReference>
<dbReference type="InterPro" id="IPR011677">
    <property type="entry name" value="Tectonic_dom"/>
</dbReference>
<dbReference type="PANTHER" id="PTHR14611">
    <property type="entry name" value="TECTONIC FAMILY MEMBER"/>
    <property type="match status" value="1"/>
</dbReference>
<dbReference type="PANTHER" id="PTHR14611:SF4">
    <property type="entry name" value="TECTONIC-3"/>
    <property type="match status" value="1"/>
</dbReference>
<dbReference type="Pfam" id="PF07773">
    <property type="entry name" value="TCTN_DUF1619"/>
    <property type="match status" value="1"/>
</dbReference>
<proteinExistence type="evidence at protein level"/>
<protein>
    <recommendedName>
        <fullName>Tectonic-3</fullName>
    </recommendedName>
</protein>
<gene>
    <name type="primary">Tctn3</name>
    <name type="synonym">Tect3</name>
</gene>
<comment type="function">
    <text evidence="1 4">Part of the tectonic-like complex which is required for tissue-specific ciliogenesis and may regulate ciliary membrane composition. May be involved in apoptosis regulation (By similarity). Necessary for signal transduction through the sonic hedgehog (Shh) signaling pathway.</text>
</comment>
<comment type="subunit">
    <text evidence="4">Part of the tectonic-like complex (also named B9 complex).</text>
</comment>
<comment type="subcellular location">
    <subcellularLocation>
        <location evidence="6">Membrane</location>
        <topology evidence="6">Single-pass type I membrane protein</topology>
    </subcellularLocation>
</comment>
<comment type="alternative products">
    <event type="alternative splicing"/>
    <isoform>
        <id>Q8R2Q6-1</id>
        <name>1</name>
        <sequence type="displayed"/>
    </isoform>
    <isoform>
        <id>Q8R2Q6-2</id>
        <name>2</name>
        <sequence type="described" ref="VSP_017769 VSP_017770"/>
    </isoform>
    <isoform>
        <id>Q8R2Q6-3</id>
        <name>3</name>
        <sequence type="described" ref="VSP_017767 VSP_017768"/>
    </isoform>
</comment>
<comment type="similarity">
    <text evidence="6">Belongs to the tectonic family.</text>
</comment>
<feature type="signal peptide" evidence="2">
    <location>
        <begin position="1"/>
        <end position="22"/>
    </location>
</feature>
<feature type="chain" id="PRO_0000229802" description="Tectonic-3">
    <location>
        <begin position="23"/>
        <end position="595"/>
    </location>
</feature>
<feature type="topological domain" description="Extracellular" evidence="2">
    <location>
        <begin position="23"/>
        <end position="575"/>
    </location>
</feature>
<feature type="transmembrane region" description="Helical" evidence="2">
    <location>
        <begin position="576"/>
        <end position="594"/>
    </location>
</feature>
<feature type="topological domain" description="Cytoplasmic" evidence="2">
    <location>
        <position position="595"/>
    </location>
</feature>
<feature type="region of interest" description="Disordered" evidence="3">
    <location>
        <begin position="23"/>
        <end position="62"/>
    </location>
</feature>
<feature type="compositionally biased region" description="Polar residues" evidence="3">
    <location>
        <begin position="49"/>
        <end position="62"/>
    </location>
</feature>
<feature type="glycosylation site" description="N-linked (GlcNAc...) asparagine" evidence="2">
    <location>
        <position position="167"/>
    </location>
</feature>
<feature type="glycosylation site" description="N-linked (GlcNAc...) asparagine" evidence="2">
    <location>
        <position position="336"/>
    </location>
</feature>
<feature type="splice variant" id="VSP_017767" description="In isoform 3." evidence="5">
    <original>AFQQRKAAAPAAPRSGNPGYLTGKPLLVLTGDTSHSMT</original>
    <variation>VSSLPSERVQRLSPRNSTLQSQYPHCLSVCLSEYLLFL</variation>
    <location>
        <begin position="355"/>
        <end position="392"/>
    </location>
</feature>
<feature type="splice variant" id="VSP_017768" description="In isoform 3." evidence="5">
    <location>
        <begin position="393"/>
        <end position="595"/>
    </location>
</feature>
<feature type="splice variant" id="VSP_017769" description="In isoform 2." evidence="5">
    <original>AVNCTSCCLIPVSLEIQVL</original>
    <variation>VRKEATTAWWLVFHLCNYA</variation>
    <location>
        <begin position="474"/>
        <end position="492"/>
    </location>
</feature>
<feature type="splice variant" id="VSP_017770" description="In isoform 2." evidence="5">
    <location>
        <begin position="493"/>
        <end position="595"/>
    </location>
</feature>
<accession>Q8R2Q6</accession>
<accession>Q8CDF3</accession>
<accession>Q9CRC5</accession>
<organism>
    <name type="scientific">Mus musculus</name>
    <name type="common">Mouse</name>
    <dbReference type="NCBI Taxonomy" id="10090"/>
    <lineage>
        <taxon>Eukaryota</taxon>
        <taxon>Metazoa</taxon>
        <taxon>Chordata</taxon>
        <taxon>Craniata</taxon>
        <taxon>Vertebrata</taxon>
        <taxon>Euteleostomi</taxon>
        <taxon>Mammalia</taxon>
        <taxon>Eutheria</taxon>
        <taxon>Euarchontoglires</taxon>
        <taxon>Glires</taxon>
        <taxon>Rodentia</taxon>
        <taxon>Myomorpha</taxon>
        <taxon>Muroidea</taxon>
        <taxon>Muridae</taxon>
        <taxon>Murinae</taxon>
        <taxon>Mus</taxon>
        <taxon>Mus</taxon>
    </lineage>
</organism>
<keyword id="KW-0025">Alternative splicing</keyword>
<keyword id="KW-0053">Apoptosis</keyword>
<keyword id="KW-0970">Cilium biogenesis/degradation</keyword>
<keyword id="KW-0325">Glycoprotein</keyword>
<keyword id="KW-0472">Membrane</keyword>
<keyword id="KW-1185">Reference proteome</keyword>
<keyword id="KW-0732">Signal</keyword>
<keyword id="KW-0812">Transmembrane</keyword>
<keyword id="KW-1133">Transmembrane helix</keyword>